<dbReference type="EC" id="2.7.7.59" evidence="1"/>
<dbReference type="EC" id="3.1.4.-" evidence="1"/>
<dbReference type="EMBL" id="CP000038">
    <property type="protein sequence ID" value="AAZ86971.1"/>
    <property type="molecule type" value="Genomic_DNA"/>
</dbReference>
<dbReference type="RefSeq" id="WP_001094568.1">
    <property type="nucleotide sequence ID" value="NC_007384.1"/>
</dbReference>
<dbReference type="SMR" id="Q3Z5J1"/>
<dbReference type="GeneID" id="93777258"/>
<dbReference type="KEGG" id="ssn:SSON_0179"/>
<dbReference type="HOGENOM" id="CLU_012833_0_0_6"/>
<dbReference type="Proteomes" id="UP000002529">
    <property type="component" value="Chromosome"/>
</dbReference>
<dbReference type="GO" id="GO:0008773">
    <property type="term" value="F:[protein-PII] uridylyltransferase activity"/>
    <property type="evidence" value="ECO:0007669"/>
    <property type="project" value="UniProtKB-UniRule"/>
</dbReference>
<dbReference type="GO" id="GO:0008081">
    <property type="term" value="F:phosphoric diester hydrolase activity"/>
    <property type="evidence" value="ECO:0007669"/>
    <property type="project" value="UniProtKB-UniRule"/>
</dbReference>
<dbReference type="GO" id="GO:0006808">
    <property type="term" value="P:regulation of nitrogen utilization"/>
    <property type="evidence" value="ECO:0007669"/>
    <property type="project" value="UniProtKB-UniRule"/>
</dbReference>
<dbReference type="CDD" id="cd04899">
    <property type="entry name" value="ACT_ACR-UUR-like_2"/>
    <property type="match status" value="1"/>
</dbReference>
<dbReference type="CDD" id="cd04900">
    <property type="entry name" value="ACT_UUR-like_1"/>
    <property type="match status" value="1"/>
</dbReference>
<dbReference type="CDD" id="cd00077">
    <property type="entry name" value="HDc"/>
    <property type="match status" value="1"/>
</dbReference>
<dbReference type="CDD" id="cd05401">
    <property type="entry name" value="NT_GlnE_GlnD_like"/>
    <property type="match status" value="1"/>
</dbReference>
<dbReference type="FunFam" id="1.10.3210.10:FF:000005">
    <property type="entry name" value="Bifunctional uridylyltransferase/uridylyl-removing enzyme"/>
    <property type="match status" value="1"/>
</dbReference>
<dbReference type="Gene3D" id="1.10.3210.10">
    <property type="entry name" value="Hypothetical protein af1432"/>
    <property type="match status" value="1"/>
</dbReference>
<dbReference type="HAMAP" id="MF_00277">
    <property type="entry name" value="PII_uridylyl_transf"/>
    <property type="match status" value="1"/>
</dbReference>
<dbReference type="InterPro" id="IPR045865">
    <property type="entry name" value="ACT-like_dom_sf"/>
</dbReference>
<dbReference type="InterPro" id="IPR002912">
    <property type="entry name" value="ACT_dom"/>
</dbReference>
<dbReference type="InterPro" id="IPR003607">
    <property type="entry name" value="HD/PDEase_dom"/>
</dbReference>
<dbReference type="InterPro" id="IPR006674">
    <property type="entry name" value="HD_domain"/>
</dbReference>
<dbReference type="InterPro" id="IPR043519">
    <property type="entry name" value="NT_sf"/>
</dbReference>
<dbReference type="InterPro" id="IPR013546">
    <property type="entry name" value="PII_UdlTrfase/GS_AdlTrfase"/>
</dbReference>
<dbReference type="InterPro" id="IPR002934">
    <property type="entry name" value="Polymerase_NTP_transf_dom"/>
</dbReference>
<dbReference type="InterPro" id="IPR010043">
    <property type="entry name" value="UTase/UR"/>
</dbReference>
<dbReference type="NCBIfam" id="NF002487">
    <property type="entry name" value="PRK01759.1"/>
    <property type="match status" value="1"/>
</dbReference>
<dbReference type="NCBIfam" id="NF003448">
    <property type="entry name" value="PRK05007.1"/>
    <property type="match status" value="1"/>
</dbReference>
<dbReference type="NCBIfam" id="TIGR01693">
    <property type="entry name" value="UTase_glnD"/>
    <property type="match status" value="1"/>
</dbReference>
<dbReference type="PANTHER" id="PTHR47320">
    <property type="entry name" value="BIFUNCTIONAL URIDYLYLTRANSFERASE/URIDYLYL-REMOVING ENZYME"/>
    <property type="match status" value="1"/>
</dbReference>
<dbReference type="PANTHER" id="PTHR47320:SF1">
    <property type="entry name" value="BIFUNCTIONAL URIDYLYLTRANSFERASE_URIDYLYL-REMOVING ENZYME"/>
    <property type="match status" value="1"/>
</dbReference>
<dbReference type="Pfam" id="PF01842">
    <property type="entry name" value="ACT"/>
    <property type="match status" value="2"/>
</dbReference>
<dbReference type="Pfam" id="PF08335">
    <property type="entry name" value="GlnD_UR_UTase"/>
    <property type="match status" value="1"/>
</dbReference>
<dbReference type="Pfam" id="PF01966">
    <property type="entry name" value="HD"/>
    <property type="match status" value="1"/>
</dbReference>
<dbReference type="Pfam" id="PF01909">
    <property type="entry name" value="NTP_transf_2"/>
    <property type="match status" value="1"/>
</dbReference>
<dbReference type="PIRSF" id="PIRSF006288">
    <property type="entry name" value="PII_uridyltransf"/>
    <property type="match status" value="1"/>
</dbReference>
<dbReference type="SMART" id="SM00471">
    <property type="entry name" value="HDc"/>
    <property type="match status" value="1"/>
</dbReference>
<dbReference type="SUPFAM" id="SSF55021">
    <property type="entry name" value="ACT-like"/>
    <property type="match status" value="2"/>
</dbReference>
<dbReference type="SUPFAM" id="SSF109604">
    <property type="entry name" value="HD-domain/PDEase-like"/>
    <property type="match status" value="1"/>
</dbReference>
<dbReference type="SUPFAM" id="SSF81301">
    <property type="entry name" value="Nucleotidyltransferase"/>
    <property type="match status" value="1"/>
</dbReference>
<dbReference type="SUPFAM" id="SSF81593">
    <property type="entry name" value="Nucleotidyltransferase substrate binding subunit/domain"/>
    <property type="match status" value="1"/>
</dbReference>
<dbReference type="PROSITE" id="PS51671">
    <property type="entry name" value="ACT"/>
    <property type="match status" value="2"/>
</dbReference>
<dbReference type="PROSITE" id="PS51831">
    <property type="entry name" value="HD"/>
    <property type="match status" value="1"/>
</dbReference>
<comment type="function">
    <text evidence="1">Modifies, by uridylylation and deuridylylation, the PII regulatory proteins (GlnB and homologs), in response to the nitrogen status of the cell that GlnD senses through the glutamine level. Under low glutamine levels, catalyzes the conversion of the PII proteins and UTP to PII-UMP and PPi, while under higher glutamine levels, GlnD hydrolyzes PII-UMP to PII and UMP (deuridylylation). Thus, controls uridylylation state and activity of the PII proteins, and plays an important role in the regulation of nitrogen assimilation and metabolism.</text>
</comment>
<comment type="catalytic activity">
    <reaction evidence="1">
        <text>[protein-PII]-L-tyrosine + UTP = [protein-PII]-uridylyl-L-tyrosine + diphosphate</text>
        <dbReference type="Rhea" id="RHEA:13673"/>
        <dbReference type="Rhea" id="RHEA-COMP:12147"/>
        <dbReference type="Rhea" id="RHEA-COMP:12148"/>
        <dbReference type="ChEBI" id="CHEBI:33019"/>
        <dbReference type="ChEBI" id="CHEBI:46398"/>
        <dbReference type="ChEBI" id="CHEBI:46858"/>
        <dbReference type="ChEBI" id="CHEBI:90602"/>
        <dbReference type="EC" id="2.7.7.59"/>
    </reaction>
</comment>
<comment type="catalytic activity">
    <reaction evidence="1">
        <text>[protein-PII]-uridylyl-L-tyrosine + H2O = [protein-PII]-L-tyrosine + UMP + H(+)</text>
        <dbReference type="Rhea" id="RHEA:48600"/>
        <dbReference type="Rhea" id="RHEA-COMP:12147"/>
        <dbReference type="Rhea" id="RHEA-COMP:12148"/>
        <dbReference type="ChEBI" id="CHEBI:15377"/>
        <dbReference type="ChEBI" id="CHEBI:15378"/>
        <dbReference type="ChEBI" id="CHEBI:46858"/>
        <dbReference type="ChEBI" id="CHEBI:57865"/>
        <dbReference type="ChEBI" id="CHEBI:90602"/>
    </reaction>
</comment>
<comment type="cofactor">
    <cofactor evidence="1">
        <name>Mg(2+)</name>
        <dbReference type="ChEBI" id="CHEBI:18420"/>
    </cofactor>
</comment>
<comment type="activity regulation">
    <text evidence="1">Uridylyltransferase (UTase) activity is inhibited by glutamine, while glutamine activates uridylyl-removing (UR) activity.</text>
</comment>
<comment type="domain">
    <text evidence="1">Has four distinct domains: an N-terminal nucleotidyltransferase (NT) domain responsible for UTase activity, a central HD domain that encodes UR activity, and two C-terminal ACT domains that seem to have a role in glutamine sensing.</text>
</comment>
<comment type="similarity">
    <text evidence="1">Belongs to the GlnD family.</text>
</comment>
<name>GLND_SHISS</name>
<accession>Q3Z5J1</accession>
<reference key="1">
    <citation type="journal article" date="2005" name="Nucleic Acids Res.">
        <title>Genome dynamics and diversity of Shigella species, the etiologic agents of bacillary dysentery.</title>
        <authorList>
            <person name="Yang F."/>
            <person name="Yang J."/>
            <person name="Zhang X."/>
            <person name="Chen L."/>
            <person name="Jiang Y."/>
            <person name="Yan Y."/>
            <person name="Tang X."/>
            <person name="Wang J."/>
            <person name="Xiong Z."/>
            <person name="Dong J."/>
            <person name="Xue Y."/>
            <person name="Zhu Y."/>
            <person name="Xu X."/>
            <person name="Sun L."/>
            <person name="Chen S."/>
            <person name="Nie H."/>
            <person name="Peng J."/>
            <person name="Xu J."/>
            <person name="Wang Y."/>
            <person name="Yuan Z."/>
            <person name="Wen Y."/>
            <person name="Yao Z."/>
            <person name="Shen Y."/>
            <person name="Qiang B."/>
            <person name="Hou Y."/>
            <person name="Yu J."/>
            <person name="Jin Q."/>
        </authorList>
    </citation>
    <scope>NUCLEOTIDE SEQUENCE [LARGE SCALE GENOMIC DNA]</scope>
    <source>
        <strain>Ss046</strain>
    </source>
</reference>
<protein>
    <recommendedName>
        <fullName evidence="1">Bifunctional uridylyltransferase/uridylyl-removing enzyme</fullName>
        <shortName evidence="1">UTase/UR</shortName>
    </recommendedName>
    <alternativeName>
        <fullName evidence="1">Bifunctional [protein-PII] modification enzyme</fullName>
    </alternativeName>
    <alternativeName>
        <fullName evidence="1">Bifunctional nitrogen sensor protein</fullName>
    </alternativeName>
    <domain>
        <recommendedName>
            <fullName evidence="1">[Protein-PII] uridylyltransferase</fullName>
            <shortName evidence="1">PII uridylyltransferase</shortName>
            <shortName evidence="1">UTase</shortName>
            <ecNumber evidence="1">2.7.7.59</ecNumber>
        </recommendedName>
    </domain>
    <domain>
        <recommendedName>
            <fullName evidence="1">[Protein-PII]-UMP uridylyl-removing enzyme</fullName>
            <shortName evidence="1">UR</shortName>
            <ecNumber evidence="1">3.1.4.-</ecNumber>
        </recommendedName>
    </domain>
</protein>
<feature type="chain" id="PRO_0000231694" description="Bifunctional uridylyltransferase/uridylyl-removing enzyme">
    <location>
        <begin position="1"/>
        <end position="890"/>
    </location>
</feature>
<feature type="domain" description="HD" evidence="2">
    <location>
        <begin position="468"/>
        <end position="590"/>
    </location>
</feature>
<feature type="domain" description="ACT 1" evidence="1">
    <location>
        <begin position="709"/>
        <end position="789"/>
    </location>
</feature>
<feature type="domain" description="ACT 2" evidence="1">
    <location>
        <begin position="816"/>
        <end position="890"/>
    </location>
</feature>
<feature type="region of interest" description="Uridylyltransferase">
    <location>
        <begin position="1"/>
        <end position="349"/>
    </location>
</feature>
<feature type="region of interest" description="Uridylyl-removing">
    <location>
        <begin position="350"/>
        <end position="708"/>
    </location>
</feature>
<proteinExistence type="inferred from homology"/>
<gene>
    <name evidence="1" type="primary">glnD</name>
    <name type="ordered locus">SSON_0179</name>
</gene>
<evidence type="ECO:0000255" key="1">
    <source>
        <dbReference type="HAMAP-Rule" id="MF_00277"/>
    </source>
</evidence>
<evidence type="ECO:0000255" key="2">
    <source>
        <dbReference type="PROSITE-ProRule" id="PRU01175"/>
    </source>
</evidence>
<sequence>MNTLPEQYANTALPTLPGQPQNPCVWPRDELTVGGIKAHIDTFQRWLGDAFDNGISAEQLIEARTEFIDQLLQRLWIEAGFSQIADLALVAVGGYGRGELHPLSDIDLLILSRKKLPDDQAQKVGELLTLLWDVKLEVGHSVRTLEECMLEGLSDLTVATNLIESRLLIGDVALFLELQKHIFSEGFWPSDKFYAAKVEEQNQRHQRYHGTSYNLEPDIKSSPGGLRDIHTLQWVARRHFGATSLDEMVGFGFLTSAERAELNECLHILWRIRFALHLVVSRYDNRLLFDRQLSVAQRLNYSGEGNEPVERMMKDYFRVTRRVSELNQMLLQLFDEAILALPADEKPRPIDDEFQLRGTLIDLRDETLFMRQPEAILRMFYTMVRNSAITGIYSTTLRQLRHARRHLQQPLCNIPEARKLFLSILRHPGAVRRGLLPMHRHSVLGAYMPQWSHIVGQMQFDLFHAYTVDEHTIRVMLKLESFASEETRQRHPLCVDVWPRLPSTELIFIAALFHDIAKGRGGDHSILGAQDVVHFAELHGLNSRETQLVAWLVRQHLLMSVTAQRRDIQDPEVIKQFAEEVQTENRLHYLVCLTVADICATNETLWNSWKQSLLRELYFATEKQLRRGMQNTPDMRERVRHHQLQALALLRMDNIDEEALHQIWSRCRANYFVRHSPNQLAWHARHLLQHDLSKPLVLLSPQATRGGTEIFIWSPDRPYLFAAVCAELDRRNLSVHDAQIFTTRDGMAMDTFIVLEPDGSPLSADRHEVIRFGLEQVLTQSSWQPPQPRRQPAKLRHFTVETEVTFLPTHTDRKSFLELIALDQPGLLARVGKIFADLGISLHGARITTIGERVEDLFIIATADRRALNNELQQEVHQRLTEALNPNDKG</sequence>
<organism>
    <name type="scientific">Shigella sonnei (strain Ss046)</name>
    <dbReference type="NCBI Taxonomy" id="300269"/>
    <lineage>
        <taxon>Bacteria</taxon>
        <taxon>Pseudomonadati</taxon>
        <taxon>Pseudomonadota</taxon>
        <taxon>Gammaproteobacteria</taxon>
        <taxon>Enterobacterales</taxon>
        <taxon>Enterobacteriaceae</taxon>
        <taxon>Shigella</taxon>
    </lineage>
</organism>
<keyword id="KW-0378">Hydrolase</keyword>
<keyword id="KW-0460">Magnesium</keyword>
<keyword id="KW-0511">Multifunctional enzyme</keyword>
<keyword id="KW-0548">Nucleotidyltransferase</keyword>
<keyword id="KW-1185">Reference proteome</keyword>
<keyword id="KW-0677">Repeat</keyword>
<keyword id="KW-0808">Transferase</keyword>